<reference key="1">
    <citation type="journal article" date="1986" name="Nucleic Acids Res.">
        <title>Sequence of a cDNA coding for mouse manganese superoxide dismutase.</title>
        <authorList>
            <person name="Hallewell R.A."/>
            <person name="Mullenbach G.T."/>
            <person name="Stempien M.M."/>
            <person name="Bell G.I."/>
        </authorList>
    </citation>
    <scope>NUCLEOTIDE SEQUENCE [MRNA]</scope>
    <source>
        <tissue>Placenta</tissue>
    </source>
</reference>
<reference key="2">
    <citation type="journal article" date="1993" name="Gene">
        <title>Sequence of manganese superoxide dismutase-encoding cDNAs from multiple mouse organs.</title>
        <authorList>
            <person name="Sun Y."/>
            <person name="Hegamyer G."/>
            <person name="Colburn N.M."/>
        </authorList>
    </citation>
    <scope>NUCLEOTIDE SEQUENCE [MRNA]</scope>
    <source>
        <strain>BALB/cJ</strain>
        <strain>C3H/HeJ</strain>
    </source>
</reference>
<reference key="3">
    <citation type="journal article" date="1995" name="Gene">
        <title>Cloning and characterization of the murine manganous superoxide dismutase-encoding gene.</title>
        <authorList>
            <person name="Jones P.L."/>
            <person name="Kucera G."/>
            <person name="Gordon H.M."/>
            <person name="Boss J.M."/>
        </authorList>
    </citation>
    <scope>NUCLEOTIDE SEQUENCE [GENOMIC DNA]</scope>
</reference>
<reference key="4">
    <citation type="journal article" date="1995" name="Mamm. Genome">
        <title>Structure and DNA sequence of the mouse MnSOD gene.</title>
        <authorList>
            <person name="Disilvestre D."/>
            <person name="Kleeberger S.R."/>
            <person name="Johns J."/>
            <person name="Levitt R.C."/>
        </authorList>
    </citation>
    <scope>NUCLEOTIDE SEQUENCE [GENOMIC DNA]</scope>
</reference>
<reference key="5">
    <citation type="journal article" date="2005" name="Science">
        <title>The transcriptional landscape of the mammalian genome.</title>
        <authorList>
            <person name="Carninci P."/>
            <person name="Kasukawa T."/>
            <person name="Katayama S."/>
            <person name="Gough J."/>
            <person name="Frith M.C."/>
            <person name="Maeda N."/>
            <person name="Oyama R."/>
            <person name="Ravasi T."/>
            <person name="Lenhard B."/>
            <person name="Wells C."/>
            <person name="Kodzius R."/>
            <person name="Shimokawa K."/>
            <person name="Bajic V.B."/>
            <person name="Brenner S.E."/>
            <person name="Batalov S."/>
            <person name="Forrest A.R."/>
            <person name="Zavolan M."/>
            <person name="Davis M.J."/>
            <person name="Wilming L.G."/>
            <person name="Aidinis V."/>
            <person name="Allen J.E."/>
            <person name="Ambesi-Impiombato A."/>
            <person name="Apweiler R."/>
            <person name="Aturaliya R.N."/>
            <person name="Bailey T.L."/>
            <person name="Bansal M."/>
            <person name="Baxter L."/>
            <person name="Beisel K.W."/>
            <person name="Bersano T."/>
            <person name="Bono H."/>
            <person name="Chalk A.M."/>
            <person name="Chiu K.P."/>
            <person name="Choudhary V."/>
            <person name="Christoffels A."/>
            <person name="Clutterbuck D.R."/>
            <person name="Crowe M.L."/>
            <person name="Dalla E."/>
            <person name="Dalrymple B.P."/>
            <person name="de Bono B."/>
            <person name="Della Gatta G."/>
            <person name="di Bernardo D."/>
            <person name="Down T."/>
            <person name="Engstrom P."/>
            <person name="Fagiolini M."/>
            <person name="Faulkner G."/>
            <person name="Fletcher C.F."/>
            <person name="Fukushima T."/>
            <person name="Furuno M."/>
            <person name="Futaki S."/>
            <person name="Gariboldi M."/>
            <person name="Georgii-Hemming P."/>
            <person name="Gingeras T.R."/>
            <person name="Gojobori T."/>
            <person name="Green R.E."/>
            <person name="Gustincich S."/>
            <person name="Harbers M."/>
            <person name="Hayashi Y."/>
            <person name="Hensch T.K."/>
            <person name="Hirokawa N."/>
            <person name="Hill D."/>
            <person name="Huminiecki L."/>
            <person name="Iacono M."/>
            <person name="Ikeo K."/>
            <person name="Iwama A."/>
            <person name="Ishikawa T."/>
            <person name="Jakt M."/>
            <person name="Kanapin A."/>
            <person name="Katoh M."/>
            <person name="Kawasawa Y."/>
            <person name="Kelso J."/>
            <person name="Kitamura H."/>
            <person name="Kitano H."/>
            <person name="Kollias G."/>
            <person name="Krishnan S.P."/>
            <person name="Kruger A."/>
            <person name="Kummerfeld S.K."/>
            <person name="Kurochkin I.V."/>
            <person name="Lareau L.F."/>
            <person name="Lazarevic D."/>
            <person name="Lipovich L."/>
            <person name="Liu J."/>
            <person name="Liuni S."/>
            <person name="McWilliam S."/>
            <person name="Madan Babu M."/>
            <person name="Madera M."/>
            <person name="Marchionni L."/>
            <person name="Matsuda H."/>
            <person name="Matsuzawa S."/>
            <person name="Miki H."/>
            <person name="Mignone F."/>
            <person name="Miyake S."/>
            <person name="Morris K."/>
            <person name="Mottagui-Tabar S."/>
            <person name="Mulder N."/>
            <person name="Nakano N."/>
            <person name="Nakauchi H."/>
            <person name="Ng P."/>
            <person name="Nilsson R."/>
            <person name="Nishiguchi S."/>
            <person name="Nishikawa S."/>
            <person name="Nori F."/>
            <person name="Ohara O."/>
            <person name="Okazaki Y."/>
            <person name="Orlando V."/>
            <person name="Pang K.C."/>
            <person name="Pavan W.J."/>
            <person name="Pavesi G."/>
            <person name="Pesole G."/>
            <person name="Petrovsky N."/>
            <person name="Piazza S."/>
            <person name="Reed J."/>
            <person name="Reid J.F."/>
            <person name="Ring B.Z."/>
            <person name="Ringwald M."/>
            <person name="Rost B."/>
            <person name="Ruan Y."/>
            <person name="Salzberg S.L."/>
            <person name="Sandelin A."/>
            <person name="Schneider C."/>
            <person name="Schoenbach C."/>
            <person name="Sekiguchi K."/>
            <person name="Semple C.A."/>
            <person name="Seno S."/>
            <person name="Sessa L."/>
            <person name="Sheng Y."/>
            <person name="Shibata Y."/>
            <person name="Shimada H."/>
            <person name="Shimada K."/>
            <person name="Silva D."/>
            <person name="Sinclair B."/>
            <person name="Sperling S."/>
            <person name="Stupka E."/>
            <person name="Sugiura K."/>
            <person name="Sultana R."/>
            <person name="Takenaka Y."/>
            <person name="Taki K."/>
            <person name="Tammoja K."/>
            <person name="Tan S.L."/>
            <person name="Tang S."/>
            <person name="Taylor M.S."/>
            <person name="Tegner J."/>
            <person name="Teichmann S.A."/>
            <person name="Ueda H.R."/>
            <person name="van Nimwegen E."/>
            <person name="Verardo R."/>
            <person name="Wei C.L."/>
            <person name="Yagi K."/>
            <person name="Yamanishi H."/>
            <person name="Zabarovsky E."/>
            <person name="Zhu S."/>
            <person name="Zimmer A."/>
            <person name="Hide W."/>
            <person name="Bult C."/>
            <person name="Grimmond S.M."/>
            <person name="Teasdale R.D."/>
            <person name="Liu E.T."/>
            <person name="Brusic V."/>
            <person name="Quackenbush J."/>
            <person name="Wahlestedt C."/>
            <person name="Mattick J.S."/>
            <person name="Hume D.A."/>
            <person name="Kai C."/>
            <person name="Sasaki D."/>
            <person name="Tomaru Y."/>
            <person name="Fukuda S."/>
            <person name="Kanamori-Katayama M."/>
            <person name="Suzuki M."/>
            <person name="Aoki J."/>
            <person name="Arakawa T."/>
            <person name="Iida J."/>
            <person name="Imamura K."/>
            <person name="Itoh M."/>
            <person name="Kato T."/>
            <person name="Kawaji H."/>
            <person name="Kawagashira N."/>
            <person name="Kawashima T."/>
            <person name="Kojima M."/>
            <person name="Kondo S."/>
            <person name="Konno H."/>
            <person name="Nakano K."/>
            <person name="Ninomiya N."/>
            <person name="Nishio T."/>
            <person name="Okada M."/>
            <person name="Plessy C."/>
            <person name="Shibata K."/>
            <person name="Shiraki T."/>
            <person name="Suzuki S."/>
            <person name="Tagami M."/>
            <person name="Waki K."/>
            <person name="Watahiki A."/>
            <person name="Okamura-Oho Y."/>
            <person name="Suzuki H."/>
            <person name="Kawai J."/>
            <person name="Hayashizaki Y."/>
        </authorList>
    </citation>
    <scope>NUCLEOTIDE SEQUENCE [LARGE SCALE MRNA]</scope>
    <source>
        <strain>C57BL/6J</strain>
        <tissue>Embryo</tissue>
        <tissue>Kidney</tissue>
    </source>
</reference>
<reference key="6">
    <citation type="journal article" date="2004" name="Genome Res.">
        <title>The status, quality, and expansion of the NIH full-length cDNA project: the Mammalian Gene Collection (MGC).</title>
        <authorList>
            <consortium name="The MGC Project Team"/>
        </authorList>
    </citation>
    <scope>NUCLEOTIDE SEQUENCE [LARGE SCALE MRNA]</scope>
    <source>
        <tissue>Mammary gland</tissue>
    </source>
</reference>
<reference key="7">
    <citation type="submission" date="2007-07" db="UniProtKB">
        <authorList>
            <person name="Lubec G."/>
            <person name="Kang S.U."/>
            <person name="Klug S."/>
            <person name="Yang J.W."/>
            <person name="Zigmond M."/>
        </authorList>
    </citation>
    <scope>PROTEIN SEQUENCE OF 54-68; 76-108; 115-130 AND 203-216</scope>
    <scope>IDENTIFICATION BY MASS SPECTROMETRY</scope>
    <source>
        <strain>C57BL/6J</strain>
        <tissue>Brain</tissue>
        <tissue>Hippocampus</tissue>
    </source>
</reference>
<reference key="8">
    <citation type="journal article" date="2010" name="Cell">
        <title>A tissue-specific atlas of mouse protein phosphorylation and expression.</title>
        <authorList>
            <person name="Huttlin E.L."/>
            <person name="Jedrychowski M.P."/>
            <person name="Elias J.E."/>
            <person name="Goswami T."/>
            <person name="Rad R."/>
            <person name="Beausoleil S.A."/>
            <person name="Villen J."/>
            <person name="Haas W."/>
            <person name="Sowa M.E."/>
            <person name="Gygi S.P."/>
        </authorList>
    </citation>
    <scope>IDENTIFICATION BY MASS SPECTROMETRY [LARGE SCALE ANALYSIS]</scope>
    <source>
        <tissue>Brain</tissue>
        <tissue>Brown adipose tissue</tissue>
        <tissue>Heart</tissue>
        <tissue>Kidney</tissue>
        <tissue>Liver</tissue>
        <tissue>Lung</tissue>
        <tissue>Pancreas</tissue>
        <tissue>Spleen</tissue>
        <tissue>Testis</tissue>
    </source>
</reference>
<reference key="9">
    <citation type="journal article" date="2010" name="Mol. Cell">
        <title>Sirt3-mediated deacetylation of evolutionarily conserved lysine 122 regulates MnSOD activity in response to stress.</title>
        <authorList>
            <person name="Tao R."/>
            <person name="Coleman M.C."/>
            <person name="Pennington J.D."/>
            <person name="Ozden O."/>
            <person name="Park S.H."/>
            <person name="Jiang H."/>
            <person name="Kim H.S."/>
            <person name="Flynn C.R."/>
            <person name="Hill S."/>
            <person name="Hayes McDonald W."/>
            <person name="Olivier A.K."/>
            <person name="Spitz D.R."/>
            <person name="Gius D."/>
        </authorList>
    </citation>
    <scope>ACETYLATION AT LYS-122</scope>
    <scope>DEACETYLATION BY SIRT3</scope>
    <scope>MUTAGENESIS OF LYS-122</scope>
</reference>
<reference key="10">
    <citation type="journal article" date="2010" name="PLoS ONE">
        <title>KRIT1 regulates the homeostasis of intracellular reactive oxygen species.</title>
        <authorList>
            <person name="Goitre L."/>
            <person name="Balzac F."/>
            <person name="Degani S."/>
            <person name="Degan P."/>
            <person name="Marchi S."/>
            <person name="Pinton P."/>
            <person name="Retta S.F."/>
        </authorList>
    </citation>
    <scope>INDUCTION</scope>
</reference>
<reference key="11">
    <citation type="journal article" date="2013" name="Mol. Cell">
        <title>SIRT5-mediated lysine desuccinylation impacts diverse metabolic pathways.</title>
        <authorList>
            <person name="Park J."/>
            <person name="Chen Y."/>
            <person name="Tishkoff D.X."/>
            <person name="Peng C."/>
            <person name="Tan M."/>
            <person name="Dai L."/>
            <person name="Xie Z."/>
            <person name="Zhang Y."/>
            <person name="Zwaans B.M."/>
            <person name="Skinner M.E."/>
            <person name="Lombard D.B."/>
            <person name="Zhao Y."/>
        </authorList>
    </citation>
    <scope>ACETYLATION [LARGE SCALE ANALYSIS] AT LYS-130</scope>
    <scope>SUCCINYLATION [LARGE SCALE ANALYSIS] AT LYS-68; LYS-75; LYS-122 AND LYS-130</scope>
    <scope>IDENTIFICATION BY MASS SPECTROMETRY [LARGE SCALE ANALYSIS]</scope>
    <source>
        <tissue>Embryonic fibroblast</tissue>
        <tissue>Liver</tissue>
    </source>
</reference>
<reference key="12">
    <citation type="journal article" date="2013" name="Proc. Natl. Acad. Sci. U.S.A.">
        <title>Label-free quantitative proteomics of the lysine acetylome in mitochondria identifies substrates of SIRT3 in metabolic pathways.</title>
        <authorList>
            <person name="Rardin M.J."/>
            <person name="Newman J.C."/>
            <person name="Held J.M."/>
            <person name="Cusack M.P."/>
            <person name="Sorensen D.J."/>
            <person name="Li B."/>
            <person name="Schilling B."/>
            <person name="Mooney S.D."/>
            <person name="Kahn C.R."/>
            <person name="Verdin E."/>
            <person name="Gibson B.W."/>
        </authorList>
    </citation>
    <scope>ACETYLATION [LARGE SCALE ANALYSIS] AT LYS-68; LYS-75; LYS-114; LYS-122; LYS-130 AND LYS-202</scope>
    <scope>IDENTIFICATION BY MASS SPECTROMETRY [LARGE SCALE ANALYSIS]</scope>
    <source>
        <tissue>Liver</tissue>
    </source>
</reference>
<protein>
    <recommendedName>
        <fullName>Superoxide dismutase [Mn], mitochondrial</fullName>
        <ecNumber>1.15.1.1</ecNumber>
    </recommendedName>
</protein>
<keyword id="KW-0007">Acetylation</keyword>
<keyword id="KW-0903">Direct protein sequencing</keyword>
<keyword id="KW-0464">Manganese</keyword>
<keyword id="KW-0479">Metal-binding</keyword>
<keyword id="KW-0496">Mitochondrion</keyword>
<keyword id="KW-0944">Nitration</keyword>
<keyword id="KW-0560">Oxidoreductase</keyword>
<keyword id="KW-1185">Reference proteome</keyword>
<keyword id="KW-0809">Transit peptide</keyword>
<keyword id="KW-0832">Ubl conjugation</keyword>
<comment type="function">
    <text>Destroys superoxide anion radicals which are normally produced within the cells and which are toxic to biological systems.</text>
</comment>
<comment type="catalytic activity">
    <reaction>
        <text>2 superoxide + 2 H(+) = H2O2 + O2</text>
        <dbReference type="Rhea" id="RHEA:20696"/>
        <dbReference type="ChEBI" id="CHEBI:15378"/>
        <dbReference type="ChEBI" id="CHEBI:15379"/>
        <dbReference type="ChEBI" id="CHEBI:16240"/>
        <dbReference type="ChEBI" id="CHEBI:18421"/>
        <dbReference type="EC" id="1.15.1.1"/>
    </reaction>
</comment>
<comment type="cofactor">
    <cofactor evidence="2">
        <name>Mn(2+)</name>
        <dbReference type="ChEBI" id="CHEBI:29035"/>
    </cofactor>
    <text evidence="2">Binds 1 Mn(2+) ion per subunit.</text>
</comment>
<comment type="subunit">
    <text>Homotetramer.</text>
</comment>
<comment type="interaction">
    <interactant intactId="EBI-1635071">
        <id>P09671</id>
    </interactant>
    <interactant intactId="EBI-863636">
        <id>P54099</id>
        <label>Polg</label>
    </interactant>
    <organismsDiffer>false</organismsDiffer>
    <experiments>2</experiments>
</comment>
<comment type="interaction">
    <interactant intactId="EBI-1635071">
        <id>P09671</id>
    </interactant>
    <interactant intactId="EBI-474016">
        <id>P02340</id>
        <label>Tp53</label>
    </interactant>
    <organismsDiffer>false</organismsDiffer>
    <experiments>2</experiments>
</comment>
<comment type="subcellular location">
    <subcellularLocation>
        <location>Mitochondrion matrix</location>
    </subcellularLocation>
</comment>
<comment type="induction">
    <text evidence="3">Expression is regulated by KRIT1.</text>
</comment>
<comment type="PTM">
    <text evidence="2">Nitrated under oxidative stress. Nitration coupled with oxidation inhibits the catalytic activity (By similarity).</text>
</comment>
<comment type="PTM">
    <text evidence="4">Acetylation at Lys-122 decreases enzymatic activity. Deacetylated by SIRT3 upon exposure to ionizing radiations or after long fasting.</text>
</comment>
<comment type="PTM">
    <text evidence="2">Polyubiquitinated; leading to proteasomal degradation. Deubiquitinated by USP36 which increases protein stability.</text>
</comment>
<comment type="similarity">
    <text evidence="5">Belongs to the iron/manganese superoxide dismutase family.</text>
</comment>
<gene>
    <name type="primary">Sod2</name>
    <name type="synonym">Sod-2</name>
</gene>
<organism>
    <name type="scientific">Mus musculus</name>
    <name type="common">Mouse</name>
    <dbReference type="NCBI Taxonomy" id="10090"/>
    <lineage>
        <taxon>Eukaryota</taxon>
        <taxon>Metazoa</taxon>
        <taxon>Chordata</taxon>
        <taxon>Craniata</taxon>
        <taxon>Vertebrata</taxon>
        <taxon>Euteleostomi</taxon>
        <taxon>Mammalia</taxon>
        <taxon>Eutheria</taxon>
        <taxon>Euarchontoglires</taxon>
        <taxon>Glires</taxon>
        <taxon>Rodentia</taxon>
        <taxon>Myomorpha</taxon>
        <taxon>Muroidea</taxon>
        <taxon>Muridae</taxon>
        <taxon>Murinae</taxon>
        <taxon>Mus</taxon>
        <taxon>Mus</taxon>
    </lineage>
</organism>
<proteinExistence type="evidence at protein level"/>
<evidence type="ECO:0000250" key="1"/>
<evidence type="ECO:0000250" key="2">
    <source>
        <dbReference type="UniProtKB" id="P04179"/>
    </source>
</evidence>
<evidence type="ECO:0000269" key="3">
    <source>
    </source>
</evidence>
<evidence type="ECO:0000269" key="4">
    <source>
    </source>
</evidence>
<evidence type="ECO:0000305" key="5"/>
<evidence type="ECO:0007744" key="6">
    <source>
    </source>
</evidence>
<evidence type="ECO:0007744" key="7">
    <source>
    </source>
</evidence>
<feature type="transit peptide" description="Mitochondrion">
    <location>
        <begin position="1"/>
        <end position="24"/>
    </location>
</feature>
<feature type="chain" id="PRO_0000032871" description="Superoxide dismutase [Mn], mitochondrial">
    <location>
        <begin position="25"/>
        <end position="222"/>
    </location>
</feature>
<feature type="binding site" evidence="1">
    <location>
        <position position="50"/>
    </location>
    <ligand>
        <name>Mn(2+)</name>
        <dbReference type="ChEBI" id="CHEBI:29035"/>
    </ligand>
</feature>
<feature type="binding site" evidence="1">
    <location>
        <position position="98"/>
    </location>
    <ligand>
        <name>Mn(2+)</name>
        <dbReference type="ChEBI" id="CHEBI:29035"/>
    </ligand>
</feature>
<feature type="binding site" evidence="1">
    <location>
        <position position="183"/>
    </location>
    <ligand>
        <name>Mn(2+)</name>
        <dbReference type="ChEBI" id="CHEBI:29035"/>
    </ligand>
</feature>
<feature type="binding site" evidence="1">
    <location>
        <position position="187"/>
    </location>
    <ligand>
        <name>Mn(2+)</name>
        <dbReference type="ChEBI" id="CHEBI:29035"/>
    </ligand>
</feature>
<feature type="modified residue" description="3'-nitrotyrosine" evidence="2">
    <location>
        <position position="58"/>
    </location>
</feature>
<feature type="modified residue" description="N6-acetyllysine; alternate" evidence="6">
    <location>
        <position position="68"/>
    </location>
</feature>
<feature type="modified residue" description="N6-succinyllysine; alternate" evidence="7">
    <location>
        <position position="68"/>
    </location>
</feature>
<feature type="modified residue" description="N6-acetyllysine; alternate" evidence="6">
    <location>
        <position position="75"/>
    </location>
</feature>
<feature type="modified residue" description="N6-succinyllysine; alternate" evidence="7">
    <location>
        <position position="75"/>
    </location>
</feature>
<feature type="modified residue" description="N6-acetyllysine" evidence="6">
    <location>
        <position position="114"/>
    </location>
</feature>
<feature type="modified residue" description="N6-acetyllysine; alternate" evidence="4 6">
    <location>
        <position position="122"/>
    </location>
</feature>
<feature type="modified residue" description="N6-succinyllysine; alternate" evidence="7">
    <location>
        <position position="122"/>
    </location>
</feature>
<feature type="modified residue" description="N6-acetyllysine; alternate" evidence="6 7">
    <location>
        <position position="130"/>
    </location>
</feature>
<feature type="modified residue" description="N6-succinyllysine; alternate" evidence="7">
    <location>
        <position position="130"/>
    </location>
</feature>
<feature type="modified residue" description="N6-acetyllysine" evidence="6">
    <location>
        <position position="202"/>
    </location>
</feature>
<feature type="mutagenesis site" description="Reverses IR-Induced increases in superoxide and genomic Instability in SIRT3-deficient mice." evidence="4">
    <original>K</original>
    <variation>R</variation>
    <location>
        <position position="122"/>
    </location>
</feature>
<feature type="sequence conflict" description="In Ref. 5; AAH18173." evidence="5" ref="5">
    <original>A</original>
    <variation>G</variation>
    <location>
        <position position="5"/>
    </location>
</feature>
<feature type="sequence conflict" description="In Ref. 1; CAA28645." evidence="5" ref="1">
    <original>G</original>
    <variation>V</variation>
    <location>
        <position position="18"/>
    </location>
</feature>
<feature type="sequence conflict" description="In Ref. 1 and 3." evidence="5" ref="1 3">
    <original>V</original>
    <variation>M</variation>
    <location>
        <position position="138"/>
    </location>
</feature>
<dbReference type="EC" id="1.15.1.1"/>
<dbReference type="EMBL" id="X04972">
    <property type="protein sequence ID" value="CAA28645.1"/>
    <property type="molecule type" value="mRNA"/>
</dbReference>
<dbReference type="EMBL" id="Z18857">
    <property type="protein sequence ID" value="CAA79308.1"/>
    <property type="molecule type" value="mRNA"/>
</dbReference>
<dbReference type="EMBL" id="L35528">
    <property type="protein sequence ID" value="AAB60902.1"/>
    <property type="molecule type" value="Genomic_DNA"/>
</dbReference>
<dbReference type="EMBL" id="L35525">
    <property type="protein sequence ID" value="AAB60902.1"/>
    <property type="status" value="JOINED"/>
    <property type="molecule type" value="Genomic_DNA"/>
</dbReference>
<dbReference type="EMBL" id="L35526">
    <property type="protein sequence ID" value="AAB60902.1"/>
    <property type="status" value="JOINED"/>
    <property type="molecule type" value="Genomic_DNA"/>
</dbReference>
<dbReference type="EMBL" id="L35527">
    <property type="protein sequence ID" value="AAB60902.1"/>
    <property type="status" value="JOINED"/>
    <property type="molecule type" value="Genomic_DNA"/>
</dbReference>
<dbReference type="EMBL" id="S78846">
    <property type="protein sequence ID" value="AAB34899.1"/>
    <property type="molecule type" value="Genomic_DNA"/>
</dbReference>
<dbReference type="EMBL" id="S78832">
    <property type="protein sequence ID" value="AAB34899.1"/>
    <property type="status" value="JOINED"/>
    <property type="molecule type" value="Genomic_DNA"/>
</dbReference>
<dbReference type="EMBL" id="S78842">
    <property type="protein sequence ID" value="AAB34899.1"/>
    <property type="status" value="JOINED"/>
    <property type="molecule type" value="Genomic_DNA"/>
</dbReference>
<dbReference type="EMBL" id="S78844">
    <property type="protein sequence ID" value="AAB34899.1"/>
    <property type="status" value="JOINED"/>
    <property type="molecule type" value="Genomic_DNA"/>
</dbReference>
<dbReference type="EMBL" id="AK002428">
    <property type="protein sequence ID" value="BAB22095.1"/>
    <property type="molecule type" value="mRNA"/>
</dbReference>
<dbReference type="EMBL" id="AK002534">
    <property type="protein sequence ID" value="BAB22170.1"/>
    <property type="molecule type" value="mRNA"/>
</dbReference>
<dbReference type="EMBL" id="AK012354">
    <property type="protein sequence ID" value="BAB28183.1"/>
    <property type="molecule type" value="mRNA"/>
</dbReference>
<dbReference type="EMBL" id="BC010548">
    <property type="protein sequence ID" value="AAH10548.1"/>
    <property type="molecule type" value="mRNA"/>
</dbReference>
<dbReference type="EMBL" id="BC018173">
    <property type="protein sequence ID" value="AAH18173.1"/>
    <property type="molecule type" value="mRNA"/>
</dbReference>
<dbReference type="CCDS" id="CCDS28399.1"/>
<dbReference type="PIR" id="I57023">
    <property type="entry name" value="I57023"/>
</dbReference>
<dbReference type="RefSeq" id="NP_038699.2">
    <property type="nucleotide sequence ID" value="NM_013671.3"/>
</dbReference>
<dbReference type="SMR" id="P09671"/>
<dbReference type="BioGRID" id="203388">
    <property type="interactions" value="15"/>
</dbReference>
<dbReference type="FunCoup" id="P09671">
    <property type="interactions" value="1815"/>
</dbReference>
<dbReference type="IntAct" id="P09671">
    <property type="interactions" value="6"/>
</dbReference>
<dbReference type="MINT" id="P09671"/>
<dbReference type="STRING" id="10090.ENSMUSP00000007012"/>
<dbReference type="GlyGen" id="P09671">
    <property type="glycosylation" value="3 sites, 1 N-linked glycan (1 site), 1 O-linked glycan (1 site)"/>
</dbReference>
<dbReference type="iPTMnet" id="P09671"/>
<dbReference type="PhosphoSitePlus" id="P09671"/>
<dbReference type="SwissPalm" id="P09671"/>
<dbReference type="REPRODUCTION-2DPAGE" id="IPI00109109"/>
<dbReference type="REPRODUCTION-2DPAGE" id="P09671"/>
<dbReference type="jPOST" id="P09671"/>
<dbReference type="PaxDb" id="10090-ENSMUSP00000007012"/>
<dbReference type="PeptideAtlas" id="P09671"/>
<dbReference type="ProteomicsDB" id="258709"/>
<dbReference type="Pumba" id="P09671"/>
<dbReference type="TopDownProteomics" id="P09671"/>
<dbReference type="Antibodypedia" id="785">
    <property type="antibodies" value="1054 antibodies from 49 providers"/>
</dbReference>
<dbReference type="DNASU" id="20656"/>
<dbReference type="Ensembl" id="ENSMUST00000007012.6">
    <property type="protein sequence ID" value="ENSMUSP00000007012.5"/>
    <property type="gene ID" value="ENSMUSG00000006818.6"/>
</dbReference>
<dbReference type="GeneID" id="20656"/>
<dbReference type="KEGG" id="mmu:20656"/>
<dbReference type="UCSC" id="uc008alv.1">
    <property type="organism name" value="mouse"/>
</dbReference>
<dbReference type="AGR" id="MGI:98352"/>
<dbReference type="CTD" id="6648"/>
<dbReference type="MGI" id="MGI:98352">
    <property type="gene designation" value="Sod2"/>
</dbReference>
<dbReference type="VEuPathDB" id="HostDB:ENSMUSG00000006818"/>
<dbReference type="eggNOG" id="KOG0876">
    <property type="taxonomic scope" value="Eukaryota"/>
</dbReference>
<dbReference type="GeneTree" id="ENSGT00390000011877"/>
<dbReference type="HOGENOM" id="CLU_031625_2_1_1"/>
<dbReference type="InParanoid" id="P09671"/>
<dbReference type="OMA" id="DSLINWD"/>
<dbReference type="OrthoDB" id="239262at2759"/>
<dbReference type="PhylomeDB" id="P09671"/>
<dbReference type="TreeFam" id="TF105132"/>
<dbReference type="Reactome" id="R-MMU-2151201">
    <property type="pathway name" value="Transcriptional activation of mitochondrial biogenesis"/>
</dbReference>
<dbReference type="Reactome" id="R-MMU-3299685">
    <property type="pathway name" value="Detoxification of Reactive Oxygen Species"/>
</dbReference>
<dbReference type="BioGRID-ORCS" id="20656">
    <property type="hits" value="25 hits in 75 CRISPR screens"/>
</dbReference>
<dbReference type="ChiTaRS" id="Sod2">
    <property type="organism name" value="mouse"/>
</dbReference>
<dbReference type="PRO" id="PR:P09671"/>
<dbReference type="Proteomes" id="UP000000589">
    <property type="component" value="Chromosome 17"/>
</dbReference>
<dbReference type="RNAct" id="P09671">
    <property type="molecule type" value="protein"/>
</dbReference>
<dbReference type="Bgee" id="ENSMUSG00000006818">
    <property type="expression patterns" value="Expressed in heart right ventricle and 305 other cell types or tissues"/>
</dbReference>
<dbReference type="ExpressionAtlas" id="P09671">
    <property type="expression patterns" value="baseline and differential"/>
</dbReference>
<dbReference type="GO" id="GO:0005743">
    <property type="term" value="C:mitochondrial inner membrane"/>
    <property type="evidence" value="ECO:0007005"/>
    <property type="project" value="MGI"/>
</dbReference>
<dbReference type="GO" id="GO:0042645">
    <property type="term" value="C:mitochondrial nucleoid"/>
    <property type="evidence" value="ECO:0007669"/>
    <property type="project" value="Ensembl"/>
</dbReference>
<dbReference type="GO" id="GO:0005739">
    <property type="term" value="C:mitochondrion"/>
    <property type="evidence" value="ECO:0000314"/>
    <property type="project" value="FlyBase"/>
</dbReference>
<dbReference type="GO" id="GO:0043209">
    <property type="term" value="C:myelin sheath"/>
    <property type="evidence" value="ECO:0007005"/>
    <property type="project" value="UniProtKB"/>
</dbReference>
<dbReference type="GO" id="GO:0003677">
    <property type="term" value="F:DNA binding"/>
    <property type="evidence" value="ECO:0007669"/>
    <property type="project" value="Ensembl"/>
</dbReference>
<dbReference type="GO" id="GO:0019899">
    <property type="term" value="F:enzyme binding"/>
    <property type="evidence" value="ECO:0007669"/>
    <property type="project" value="Ensembl"/>
</dbReference>
<dbReference type="GO" id="GO:0042802">
    <property type="term" value="F:identical protein binding"/>
    <property type="evidence" value="ECO:0007669"/>
    <property type="project" value="Ensembl"/>
</dbReference>
<dbReference type="GO" id="GO:0030145">
    <property type="term" value="F:manganese ion binding"/>
    <property type="evidence" value="ECO:0000250"/>
    <property type="project" value="UniProtKB"/>
</dbReference>
<dbReference type="GO" id="GO:0016491">
    <property type="term" value="F:oxidoreductase activity"/>
    <property type="evidence" value="ECO:0000315"/>
    <property type="project" value="CACAO"/>
</dbReference>
<dbReference type="GO" id="GO:0019825">
    <property type="term" value="F:oxygen binding"/>
    <property type="evidence" value="ECO:0007669"/>
    <property type="project" value="Ensembl"/>
</dbReference>
<dbReference type="GO" id="GO:0004784">
    <property type="term" value="F:superoxide dismutase activity"/>
    <property type="evidence" value="ECO:0000314"/>
    <property type="project" value="MGI"/>
</dbReference>
<dbReference type="GO" id="GO:0003069">
    <property type="term" value="P:acetylcholine-mediated vasodilation involved in regulation of systemic arterial blood pressure"/>
    <property type="evidence" value="ECO:0000315"/>
    <property type="project" value="MGI"/>
</dbReference>
<dbReference type="GO" id="GO:0008637">
    <property type="term" value="P:apoptotic mitochondrial changes"/>
    <property type="evidence" value="ECO:0000315"/>
    <property type="project" value="MGI"/>
</dbReference>
<dbReference type="GO" id="GO:0071361">
    <property type="term" value="P:cellular response to ethanol"/>
    <property type="evidence" value="ECO:0007669"/>
    <property type="project" value="Ensembl"/>
</dbReference>
<dbReference type="GO" id="GO:0034599">
    <property type="term" value="P:cellular response to oxidative stress"/>
    <property type="evidence" value="ECO:0000250"/>
    <property type="project" value="UniProtKB"/>
</dbReference>
<dbReference type="GO" id="GO:0003032">
    <property type="term" value="P:detection of oxygen"/>
    <property type="evidence" value="ECO:0000315"/>
    <property type="project" value="MGI"/>
</dbReference>
<dbReference type="GO" id="GO:0048773">
    <property type="term" value="P:erythrophore differentiation"/>
    <property type="evidence" value="ECO:0000315"/>
    <property type="project" value="MGI"/>
</dbReference>
<dbReference type="GO" id="GO:0006749">
    <property type="term" value="P:glutathione metabolic process"/>
    <property type="evidence" value="ECO:0000315"/>
    <property type="project" value="MGI"/>
</dbReference>
<dbReference type="GO" id="GO:0007507">
    <property type="term" value="P:heart development"/>
    <property type="evidence" value="ECO:0000315"/>
    <property type="project" value="MGI"/>
</dbReference>
<dbReference type="GO" id="GO:0030097">
    <property type="term" value="P:hemopoiesis"/>
    <property type="evidence" value="ECO:0000315"/>
    <property type="project" value="MGI"/>
</dbReference>
<dbReference type="GO" id="GO:0050665">
    <property type="term" value="P:hydrogen peroxide biosynthetic process"/>
    <property type="evidence" value="ECO:0007669"/>
    <property type="project" value="Ensembl"/>
</dbReference>
<dbReference type="GO" id="GO:0032364">
    <property type="term" value="P:intracellular oxygen homeostasis"/>
    <property type="evidence" value="ECO:0007669"/>
    <property type="project" value="Ensembl"/>
</dbReference>
<dbReference type="GO" id="GO:0008630">
    <property type="term" value="P:intrinsic apoptotic signaling pathway in response to DNA damage"/>
    <property type="evidence" value="ECO:0000315"/>
    <property type="project" value="MGI"/>
</dbReference>
<dbReference type="GO" id="GO:0008631">
    <property type="term" value="P:intrinsic apoptotic signaling pathway in response to oxidative stress"/>
    <property type="evidence" value="ECO:0000315"/>
    <property type="project" value="MGI"/>
</dbReference>
<dbReference type="GO" id="GO:0001889">
    <property type="term" value="P:liver development"/>
    <property type="evidence" value="ECO:0000315"/>
    <property type="project" value="MGI"/>
</dbReference>
<dbReference type="GO" id="GO:0007626">
    <property type="term" value="P:locomotory behavior"/>
    <property type="evidence" value="ECO:0000315"/>
    <property type="project" value="MGI"/>
</dbReference>
<dbReference type="GO" id="GO:0007005">
    <property type="term" value="P:mitochondrion organization"/>
    <property type="evidence" value="ECO:0000315"/>
    <property type="project" value="MGI"/>
</dbReference>
<dbReference type="GO" id="GO:0060586">
    <property type="term" value="P:multicellular organismal-level iron ion homeostasis"/>
    <property type="evidence" value="ECO:0000315"/>
    <property type="project" value="MGI"/>
</dbReference>
<dbReference type="GO" id="GO:0045599">
    <property type="term" value="P:negative regulation of fat cell differentiation"/>
    <property type="evidence" value="ECO:0000315"/>
    <property type="project" value="MGI"/>
</dbReference>
<dbReference type="GO" id="GO:0048147">
    <property type="term" value="P:negative regulation of fibroblast proliferation"/>
    <property type="evidence" value="ECO:0000314"/>
    <property type="project" value="MGI"/>
</dbReference>
<dbReference type="GO" id="GO:1902631">
    <property type="term" value="P:negative regulation of membrane hyperpolarization"/>
    <property type="evidence" value="ECO:0007669"/>
    <property type="project" value="Ensembl"/>
</dbReference>
<dbReference type="GO" id="GO:0043524">
    <property type="term" value="P:negative regulation of neuron apoptotic process"/>
    <property type="evidence" value="ECO:0007669"/>
    <property type="project" value="Ensembl"/>
</dbReference>
<dbReference type="GO" id="GO:1902176">
    <property type="term" value="P:negative regulation of oxidative stress-induced intrinsic apoptotic signaling pathway"/>
    <property type="evidence" value="ECO:0007669"/>
    <property type="project" value="Ensembl"/>
</dbReference>
<dbReference type="GO" id="GO:1904706">
    <property type="term" value="P:negative regulation of vascular associated smooth muscle cell proliferation"/>
    <property type="evidence" value="ECO:0007669"/>
    <property type="project" value="Ensembl"/>
</dbReference>
<dbReference type="GO" id="GO:0048666">
    <property type="term" value="P:neuron development"/>
    <property type="evidence" value="ECO:0000315"/>
    <property type="project" value="MGI"/>
</dbReference>
<dbReference type="GO" id="GO:0030335">
    <property type="term" value="P:positive regulation of cell migration"/>
    <property type="evidence" value="ECO:0007669"/>
    <property type="project" value="Ensembl"/>
</dbReference>
<dbReference type="GO" id="GO:0010729">
    <property type="term" value="P:positive regulation of hydrogen peroxide biosynthetic process"/>
    <property type="evidence" value="ECO:0007669"/>
    <property type="project" value="Ensembl"/>
</dbReference>
<dbReference type="GO" id="GO:0045429">
    <property type="term" value="P:positive regulation of nitric oxide biosynthetic process"/>
    <property type="evidence" value="ECO:0000315"/>
    <property type="project" value="MGI"/>
</dbReference>
<dbReference type="GO" id="GO:1905461">
    <property type="term" value="P:positive regulation of vascular associated smooth muscle cell apoptotic process"/>
    <property type="evidence" value="ECO:0007669"/>
    <property type="project" value="Ensembl"/>
</dbReference>
<dbReference type="GO" id="GO:1905932">
    <property type="term" value="P:positive regulation of vascular associated smooth muscle cell differentiation involved in phenotypic switching"/>
    <property type="evidence" value="ECO:0007669"/>
    <property type="project" value="Ensembl"/>
</dbReference>
<dbReference type="GO" id="GO:0009791">
    <property type="term" value="P:post-embryonic development"/>
    <property type="evidence" value="ECO:0000315"/>
    <property type="project" value="MGI"/>
</dbReference>
<dbReference type="GO" id="GO:0051289">
    <property type="term" value="P:protein homotetramerization"/>
    <property type="evidence" value="ECO:0007669"/>
    <property type="project" value="Ensembl"/>
</dbReference>
<dbReference type="GO" id="GO:0008217">
    <property type="term" value="P:regulation of blood pressure"/>
    <property type="evidence" value="ECO:0000315"/>
    <property type="project" value="MGI"/>
</dbReference>
<dbReference type="GO" id="GO:0051881">
    <property type="term" value="P:regulation of mitochondrial membrane potential"/>
    <property type="evidence" value="ECO:0000315"/>
    <property type="project" value="MGI"/>
</dbReference>
<dbReference type="GO" id="GO:0006357">
    <property type="term" value="P:regulation of transcription by RNA polymerase II"/>
    <property type="evidence" value="ECO:0000314"/>
    <property type="project" value="MGI"/>
</dbReference>
<dbReference type="GO" id="GO:0001836">
    <property type="term" value="P:release of cytochrome c from mitochondria"/>
    <property type="evidence" value="ECO:0000315"/>
    <property type="project" value="MGI"/>
</dbReference>
<dbReference type="GO" id="GO:0019430">
    <property type="term" value="P:removal of superoxide radicals"/>
    <property type="evidence" value="ECO:0000315"/>
    <property type="project" value="MGI"/>
</dbReference>
<dbReference type="GO" id="GO:0022904">
    <property type="term" value="P:respiratory electron transport chain"/>
    <property type="evidence" value="ECO:0000315"/>
    <property type="project" value="MGI"/>
</dbReference>
<dbReference type="GO" id="GO:0014823">
    <property type="term" value="P:response to activity"/>
    <property type="evidence" value="ECO:0000315"/>
    <property type="project" value="MGI"/>
</dbReference>
<dbReference type="GO" id="GO:0048678">
    <property type="term" value="P:response to axon injury"/>
    <property type="evidence" value="ECO:0000315"/>
    <property type="project" value="MGI"/>
</dbReference>
<dbReference type="GO" id="GO:0046686">
    <property type="term" value="P:response to cadmium ion"/>
    <property type="evidence" value="ECO:0007669"/>
    <property type="project" value="Ensembl"/>
</dbReference>
<dbReference type="GO" id="GO:0051602">
    <property type="term" value="P:response to electrical stimulus"/>
    <property type="evidence" value="ECO:0007669"/>
    <property type="project" value="Ensembl"/>
</dbReference>
<dbReference type="GO" id="GO:0010332">
    <property type="term" value="P:response to gamma radiation"/>
    <property type="evidence" value="ECO:0000316"/>
    <property type="project" value="MGI"/>
</dbReference>
<dbReference type="GO" id="GO:0042542">
    <property type="term" value="P:response to hydrogen peroxide"/>
    <property type="evidence" value="ECO:0000315"/>
    <property type="project" value="MGI"/>
</dbReference>
<dbReference type="GO" id="GO:0055093">
    <property type="term" value="P:response to hyperoxia"/>
    <property type="evidence" value="ECO:0000315"/>
    <property type="project" value="MGI"/>
</dbReference>
<dbReference type="GO" id="GO:0001666">
    <property type="term" value="P:response to hypoxia"/>
    <property type="evidence" value="ECO:0007669"/>
    <property type="project" value="Ensembl"/>
</dbReference>
<dbReference type="GO" id="GO:0035902">
    <property type="term" value="P:response to immobilization stress"/>
    <property type="evidence" value="ECO:0007669"/>
    <property type="project" value="Ensembl"/>
</dbReference>
<dbReference type="GO" id="GO:0035900">
    <property type="term" value="P:response to isolation stress"/>
    <property type="evidence" value="ECO:0007669"/>
    <property type="project" value="Ensembl"/>
</dbReference>
<dbReference type="GO" id="GO:0033591">
    <property type="term" value="P:response to L-ascorbic acid"/>
    <property type="evidence" value="ECO:0007669"/>
    <property type="project" value="Ensembl"/>
</dbReference>
<dbReference type="GO" id="GO:0032496">
    <property type="term" value="P:response to lipopolysaccharide"/>
    <property type="evidence" value="ECO:0007669"/>
    <property type="project" value="Ensembl"/>
</dbReference>
<dbReference type="GO" id="GO:0071000">
    <property type="term" value="P:response to magnetism"/>
    <property type="evidence" value="ECO:0007669"/>
    <property type="project" value="Ensembl"/>
</dbReference>
<dbReference type="GO" id="GO:0010042">
    <property type="term" value="P:response to manganese ion"/>
    <property type="evidence" value="ECO:0007669"/>
    <property type="project" value="Ensembl"/>
</dbReference>
<dbReference type="GO" id="GO:0006979">
    <property type="term" value="P:response to oxidative stress"/>
    <property type="evidence" value="ECO:0000315"/>
    <property type="project" value="MGI"/>
</dbReference>
<dbReference type="GO" id="GO:0000302">
    <property type="term" value="P:response to reactive oxygen species"/>
    <property type="evidence" value="ECO:0000315"/>
    <property type="project" value="MGI"/>
</dbReference>
<dbReference type="GO" id="GO:0010269">
    <property type="term" value="P:response to selenium ion"/>
    <property type="evidence" value="ECO:0007669"/>
    <property type="project" value="Ensembl"/>
</dbReference>
<dbReference type="GO" id="GO:0034021">
    <property type="term" value="P:response to silicon dioxide"/>
    <property type="evidence" value="ECO:0007669"/>
    <property type="project" value="Ensembl"/>
</dbReference>
<dbReference type="GO" id="GO:0000303">
    <property type="term" value="P:response to superoxide"/>
    <property type="evidence" value="ECO:0000315"/>
    <property type="project" value="MGI"/>
</dbReference>
<dbReference type="GO" id="GO:0009410">
    <property type="term" value="P:response to xenobiotic stimulus"/>
    <property type="evidence" value="ECO:0007669"/>
    <property type="project" value="Ensembl"/>
</dbReference>
<dbReference type="GO" id="GO:0010043">
    <property type="term" value="P:response to zinc ion"/>
    <property type="evidence" value="ECO:0007669"/>
    <property type="project" value="Ensembl"/>
</dbReference>
<dbReference type="GO" id="GO:0042554">
    <property type="term" value="P:superoxide anion generation"/>
    <property type="evidence" value="ECO:0000315"/>
    <property type="project" value="MGI"/>
</dbReference>
<dbReference type="GO" id="GO:0006801">
    <property type="term" value="P:superoxide metabolic process"/>
    <property type="evidence" value="ECO:0000315"/>
    <property type="project" value="MGI"/>
</dbReference>
<dbReference type="GO" id="GO:0042311">
    <property type="term" value="P:vasodilation"/>
    <property type="evidence" value="ECO:0000315"/>
    <property type="project" value="MGI"/>
</dbReference>
<dbReference type="FunFam" id="1.10.287.990:FF:000001">
    <property type="entry name" value="Superoxide dismutase"/>
    <property type="match status" value="1"/>
</dbReference>
<dbReference type="FunFam" id="3.55.40.20:FF:000003">
    <property type="entry name" value="Superoxide dismutase [Mn], mitochondrial"/>
    <property type="match status" value="1"/>
</dbReference>
<dbReference type="Gene3D" id="1.10.287.990">
    <property type="entry name" value="Fe,Mn superoxide dismutase (SOD) domain"/>
    <property type="match status" value="1"/>
</dbReference>
<dbReference type="Gene3D" id="3.55.40.20">
    <property type="entry name" value="Iron/manganese superoxide dismutase, C-terminal domain"/>
    <property type="match status" value="1"/>
</dbReference>
<dbReference type="InterPro" id="IPR050265">
    <property type="entry name" value="Fe/Mn_Superoxide_Dismutase"/>
</dbReference>
<dbReference type="InterPro" id="IPR001189">
    <property type="entry name" value="Mn/Fe_SOD"/>
</dbReference>
<dbReference type="InterPro" id="IPR019833">
    <property type="entry name" value="Mn/Fe_SOD_BS"/>
</dbReference>
<dbReference type="InterPro" id="IPR019832">
    <property type="entry name" value="Mn/Fe_SOD_C"/>
</dbReference>
<dbReference type="InterPro" id="IPR019831">
    <property type="entry name" value="Mn/Fe_SOD_N"/>
</dbReference>
<dbReference type="InterPro" id="IPR036324">
    <property type="entry name" value="Mn/Fe_SOD_N_sf"/>
</dbReference>
<dbReference type="InterPro" id="IPR036314">
    <property type="entry name" value="SOD_C_sf"/>
</dbReference>
<dbReference type="PANTHER" id="PTHR11404">
    <property type="entry name" value="SUPEROXIDE DISMUTASE 2"/>
    <property type="match status" value="1"/>
</dbReference>
<dbReference type="PANTHER" id="PTHR11404:SF6">
    <property type="entry name" value="SUPEROXIDE DISMUTASE [MN], MITOCHONDRIAL"/>
    <property type="match status" value="1"/>
</dbReference>
<dbReference type="Pfam" id="PF02777">
    <property type="entry name" value="Sod_Fe_C"/>
    <property type="match status" value="1"/>
</dbReference>
<dbReference type="Pfam" id="PF00081">
    <property type="entry name" value="Sod_Fe_N"/>
    <property type="match status" value="1"/>
</dbReference>
<dbReference type="PIRSF" id="PIRSF000349">
    <property type="entry name" value="SODismutase"/>
    <property type="match status" value="1"/>
</dbReference>
<dbReference type="PRINTS" id="PR01703">
    <property type="entry name" value="MNSODISMTASE"/>
</dbReference>
<dbReference type="SUPFAM" id="SSF54719">
    <property type="entry name" value="Fe,Mn superoxide dismutase (SOD), C-terminal domain"/>
    <property type="match status" value="1"/>
</dbReference>
<dbReference type="SUPFAM" id="SSF46609">
    <property type="entry name" value="Fe,Mn superoxide dismutase (SOD), N-terminal domain"/>
    <property type="match status" value="1"/>
</dbReference>
<dbReference type="PROSITE" id="PS00088">
    <property type="entry name" value="SOD_MN"/>
    <property type="match status" value="1"/>
</dbReference>
<name>SODM_MOUSE</name>
<accession>P09671</accession>
<accession>Q64670</accession>
<accession>Q8VEM5</accession>
<sequence length="222" mass="24603">MLCRAACSTGRRLGPVAGAAGSRHKHSLPDLPYDYGALEPHINAQIMQLHHSKHHAAYVNNLNATEEKYHEALAKGDVTTQVALQPALKFNGGGHINHTIFWTNLSPKGGGEPKGELLEAIKRDFGSFEKFKEKLTAVSVGVQGSGWGWLGFNKEQGRLQIAACSNQDPLQGTTGLIPLLGIDVWEHAYYLQYKNVRPDYLKAIWNVINWENVTERYTACKK</sequence>